<protein>
    <recommendedName>
        <fullName evidence="1">GTPase Obg</fullName>
        <ecNumber evidence="1">3.6.5.-</ecNumber>
    </recommendedName>
    <alternativeName>
        <fullName evidence="1">GTP-binding protein Obg</fullName>
    </alternativeName>
</protein>
<comment type="function">
    <text evidence="1">An essential GTPase which binds GTP, GDP and possibly (p)ppGpp with moderate affinity, with high nucleotide exchange rates and a fairly low GTP hydrolysis rate. Plays a role in control of the cell cycle, stress response, ribosome biogenesis and in those bacteria that undergo differentiation, in morphogenesis control.</text>
</comment>
<comment type="cofactor">
    <cofactor evidence="1">
        <name>Mg(2+)</name>
        <dbReference type="ChEBI" id="CHEBI:18420"/>
    </cofactor>
</comment>
<comment type="subunit">
    <text evidence="1">Monomer.</text>
</comment>
<comment type="subcellular location">
    <subcellularLocation>
        <location evidence="1">Cytoplasm</location>
    </subcellularLocation>
</comment>
<comment type="similarity">
    <text evidence="1">Belongs to the TRAFAC class OBG-HflX-like GTPase superfamily. OBG GTPase family.</text>
</comment>
<reference key="1">
    <citation type="submission" date="2007-11" db="EMBL/GenBank/DDBJ databases">
        <title>Complete sequence of chromosome of Shewanella baltica OS195.</title>
        <authorList>
            <consortium name="US DOE Joint Genome Institute"/>
            <person name="Copeland A."/>
            <person name="Lucas S."/>
            <person name="Lapidus A."/>
            <person name="Barry K."/>
            <person name="Glavina del Rio T."/>
            <person name="Dalin E."/>
            <person name="Tice H."/>
            <person name="Pitluck S."/>
            <person name="Chain P."/>
            <person name="Malfatti S."/>
            <person name="Shin M."/>
            <person name="Vergez L."/>
            <person name="Schmutz J."/>
            <person name="Larimer F."/>
            <person name="Land M."/>
            <person name="Hauser L."/>
            <person name="Kyrpides N."/>
            <person name="Kim E."/>
            <person name="Brettar I."/>
            <person name="Rodrigues J."/>
            <person name="Konstantinidis K."/>
            <person name="Klappenbach J."/>
            <person name="Hofle M."/>
            <person name="Tiedje J."/>
            <person name="Richardson P."/>
        </authorList>
    </citation>
    <scope>NUCLEOTIDE SEQUENCE [LARGE SCALE GENOMIC DNA]</scope>
    <source>
        <strain>OS195</strain>
    </source>
</reference>
<proteinExistence type="inferred from homology"/>
<keyword id="KW-0963">Cytoplasm</keyword>
<keyword id="KW-0342">GTP-binding</keyword>
<keyword id="KW-0378">Hydrolase</keyword>
<keyword id="KW-0460">Magnesium</keyword>
<keyword id="KW-0479">Metal-binding</keyword>
<keyword id="KW-0547">Nucleotide-binding</keyword>
<feature type="chain" id="PRO_0000386238" description="GTPase Obg">
    <location>
        <begin position="1"/>
        <end position="389"/>
    </location>
</feature>
<feature type="domain" description="Obg" evidence="2">
    <location>
        <begin position="1"/>
        <end position="159"/>
    </location>
</feature>
<feature type="domain" description="OBG-type G" evidence="1">
    <location>
        <begin position="160"/>
        <end position="333"/>
    </location>
</feature>
<feature type="binding site" evidence="1">
    <location>
        <begin position="166"/>
        <end position="173"/>
    </location>
    <ligand>
        <name>GTP</name>
        <dbReference type="ChEBI" id="CHEBI:37565"/>
    </ligand>
</feature>
<feature type="binding site" evidence="1">
    <location>
        <position position="173"/>
    </location>
    <ligand>
        <name>Mg(2+)</name>
        <dbReference type="ChEBI" id="CHEBI:18420"/>
    </ligand>
</feature>
<feature type="binding site" evidence="1">
    <location>
        <begin position="191"/>
        <end position="195"/>
    </location>
    <ligand>
        <name>GTP</name>
        <dbReference type="ChEBI" id="CHEBI:37565"/>
    </ligand>
</feature>
<feature type="binding site" evidence="1">
    <location>
        <position position="193"/>
    </location>
    <ligand>
        <name>Mg(2+)</name>
        <dbReference type="ChEBI" id="CHEBI:18420"/>
    </ligand>
</feature>
<feature type="binding site" evidence="1">
    <location>
        <begin position="213"/>
        <end position="216"/>
    </location>
    <ligand>
        <name>GTP</name>
        <dbReference type="ChEBI" id="CHEBI:37565"/>
    </ligand>
</feature>
<feature type="binding site" evidence="1">
    <location>
        <begin position="283"/>
        <end position="286"/>
    </location>
    <ligand>
        <name>GTP</name>
        <dbReference type="ChEBI" id="CHEBI:37565"/>
    </ligand>
</feature>
<feature type="binding site" evidence="1">
    <location>
        <begin position="314"/>
        <end position="316"/>
    </location>
    <ligand>
        <name>GTP</name>
        <dbReference type="ChEBI" id="CHEBI:37565"/>
    </ligand>
</feature>
<organism>
    <name type="scientific">Shewanella baltica (strain OS195)</name>
    <dbReference type="NCBI Taxonomy" id="399599"/>
    <lineage>
        <taxon>Bacteria</taxon>
        <taxon>Pseudomonadati</taxon>
        <taxon>Pseudomonadota</taxon>
        <taxon>Gammaproteobacteria</taxon>
        <taxon>Alteromonadales</taxon>
        <taxon>Shewanellaceae</taxon>
        <taxon>Shewanella</taxon>
    </lineage>
</organism>
<gene>
    <name evidence="1" type="primary">obg</name>
    <name type="ordered locus">Sbal195_1071</name>
</gene>
<accession>A9L430</accession>
<sequence length="389" mass="42921">MKFVDEAVIRVEAGDGGSGCVSFRREKYVPDGGPDGGDGGDGGSVFLQADENFNTLIEFRFERFHMAERGENGRGRDCTGHSGKDLILKVPVGTRAVDHDTEEVLGDLTTHGQKLLVAKGGFHGLGNTRFKSSTNRAPRQKTLGTPGEVRSLKLELLLLADVGLLGMPNAGKSTFIRAVSRATPKVADYPFTTLVPNLGVVNPRPGQSFVIADIPGLIEGAADGAGLGIRFLKHLERCRILLHIIDIEPIDGTDPVESARAIVGELEKYSPKLASKPRWLVFNKTDLLLEEELQQKVDRIVKEMGWEGDVYTISAYNRDGTNELALKLLDYIASLPPEDNEIDPDSEVEFKWDNYHQANLDSVNEDYVDEDDDDDFDDDDYDVEVIYQR</sequence>
<dbReference type="EC" id="3.6.5.-" evidence="1"/>
<dbReference type="EMBL" id="CP000891">
    <property type="protein sequence ID" value="ABX48247.1"/>
    <property type="molecule type" value="Genomic_DNA"/>
</dbReference>
<dbReference type="SMR" id="A9L430"/>
<dbReference type="KEGG" id="sbn:Sbal195_1071"/>
<dbReference type="HOGENOM" id="CLU_011747_2_0_6"/>
<dbReference type="Proteomes" id="UP000000770">
    <property type="component" value="Chromosome"/>
</dbReference>
<dbReference type="GO" id="GO:0005737">
    <property type="term" value="C:cytoplasm"/>
    <property type="evidence" value="ECO:0007669"/>
    <property type="project" value="UniProtKB-SubCell"/>
</dbReference>
<dbReference type="GO" id="GO:0005525">
    <property type="term" value="F:GTP binding"/>
    <property type="evidence" value="ECO:0007669"/>
    <property type="project" value="UniProtKB-UniRule"/>
</dbReference>
<dbReference type="GO" id="GO:0003924">
    <property type="term" value="F:GTPase activity"/>
    <property type="evidence" value="ECO:0007669"/>
    <property type="project" value="UniProtKB-UniRule"/>
</dbReference>
<dbReference type="GO" id="GO:0000287">
    <property type="term" value="F:magnesium ion binding"/>
    <property type="evidence" value="ECO:0007669"/>
    <property type="project" value="InterPro"/>
</dbReference>
<dbReference type="GO" id="GO:0042254">
    <property type="term" value="P:ribosome biogenesis"/>
    <property type="evidence" value="ECO:0007669"/>
    <property type="project" value="UniProtKB-UniRule"/>
</dbReference>
<dbReference type="CDD" id="cd01898">
    <property type="entry name" value="Obg"/>
    <property type="match status" value="1"/>
</dbReference>
<dbReference type="FunFam" id="2.70.210.12:FF:000001">
    <property type="entry name" value="GTPase Obg"/>
    <property type="match status" value="1"/>
</dbReference>
<dbReference type="Gene3D" id="2.70.210.12">
    <property type="entry name" value="GTP1/OBG domain"/>
    <property type="match status" value="1"/>
</dbReference>
<dbReference type="Gene3D" id="3.40.50.300">
    <property type="entry name" value="P-loop containing nucleotide triphosphate hydrolases"/>
    <property type="match status" value="1"/>
</dbReference>
<dbReference type="HAMAP" id="MF_01454">
    <property type="entry name" value="GTPase_Obg"/>
    <property type="match status" value="1"/>
</dbReference>
<dbReference type="InterPro" id="IPR031167">
    <property type="entry name" value="G_OBG"/>
</dbReference>
<dbReference type="InterPro" id="IPR006073">
    <property type="entry name" value="GTP-bd"/>
</dbReference>
<dbReference type="InterPro" id="IPR014100">
    <property type="entry name" value="GTP-bd_Obg/CgtA"/>
</dbReference>
<dbReference type="InterPro" id="IPR006074">
    <property type="entry name" value="GTP1-OBG_CS"/>
</dbReference>
<dbReference type="InterPro" id="IPR006169">
    <property type="entry name" value="GTP1_OBG_dom"/>
</dbReference>
<dbReference type="InterPro" id="IPR036726">
    <property type="entry name" value="GTP1_OBG_dom_sf"/>
</dbReference>
<dbReference type="InterPro" id="IPR045086">
    <property type="entry name" value="OBG_GTPase"/>
</dbReference>
<dbReference type="InterPro" id="IPR027417">
    <property type="entry name" value="P-loop_NTPase"/>
</dbReference>
<dbReference type="NCBIfam" id="TIGR02729">
    <property type="entry name" value="Obg_CgtA"/>
    <property type="match status" value="1"/>
</dbReference>
<dbReference type="NCBIfam" id="NF008955">
    <property type="entry name" value="PRK12297.1"/>
    <property type="match status" value="1"/>
</dbReference>
<dbReference type="NCBIfam" id="NF008956">
    <property type="entry name" value="PRK12299.1"/>
    <property type="match status" value="1"/>
</dbReference>
<dbReference type="PANTHER" id="PTHR11702">
    <property type="entry name" value="DEVELOPMENTALLY REGULATED GTP-BINDING PROTEIN-RELATED"/>
    <property type="match status" value="1"/>
</dbReference>
<dbReference type="PANTHER" id="PTHR11702:SF31">
    <property type="entry name" value="MITOCHONDRIAL RIBOSOME-ASSOCIATED GTPASE 2"/>
    <property type="match status" value="1"/>
</dbReference>
<dbReference type="Pfam" id="PF01018">
    <property type="entry name" value="GTP1_OBG"/>
    <property type="match status" value="1"/>
</dbReference>
<dbReference type="Pfam" id="PF01926">
    <property type="entry name" value="MMR_HSR1"/>
    <property type="match status" value="1"/>
</dbReference>
<dbReference type="PIRSF" id="PIRSF002401">
    <property type="entry name" value="GTP_bd_Obg/CgtA"/>
    <property type="match status" value="1"/>
</dbReference>
<dbReference type="PRINTS" id="PR00326">
    <property type="entry name" value="GTP1OBG"/>
</dbReference>
<dbReference type="SUPFAM" id="SSF82051">
    <property type="entry name" value="Obg GTP-binding protein N-terminal domain"/>
    <property type="match status" value="1"/>
</dbReference>
<dbReference type="SUPFAM" id="SSF52540">
    <property type="entry name" value="P-loop containing nucleoside triphosphate hydrolases"/>
    <property type="match status" value="1"/>
</dbReference>
<dbReference type="PROSITE" id="PS51710">
    <property type="entry name" value="G_OBG"/>
    <property type="match status" value="1"/>
</dbReference>
<dbReference type="PROSITE" id="PS00905">
    <property type="entry name" value="GTP1_OBG"/>
    <property type="match status" value="1"/>
</dbReference>
<dbReference type="PROSITE" id="PS51883">
    <property type="entry name" value="OBG"/>
    <property type="match status" value="1"/>
</dbReference>
<evidence type="ECO:0000255" key="1">
    <source>
        <dbReference type="HAMAP-Rule" id="MF_01454"/>
    </source>
</evidence>
<evidence type="ECO:0000255" key="2">
    <source>
        <dbReference type="PROSITE-ProRule" id="PRU01231"/>
    </source>
</evidence>
<name>OBG_SHEB9</name>